<feature type="chain" id="PRO_0000404270" description="Capsid protein">
    <location>
        <begin position="1"/>
        <end position="770"/>
    </location>
</feature>
<feature type="region of interest" description="Disordered" evidence="2">
    <location>
        <begin position="645"/>
        <end position="682"/>
    </location>
</feature>
<feature type="region of interest" description="Disordered" evidence="2">
    <location>
        <begin position="697"/>
        <end position="717"/>
    </location>
</feature>
<feature type="compositionally biased region" description="Polar residues" evidence="2">
    <location>
        <begin position="646"/>
        <end position="656"/>
    </location>
</feature>
<feature type="compositionally biased region" description="Basic and acidic residues" evidence="2">
    <location>
        <begin position="666"/>
        <end position="681"/>
    </location>
</feature>
<feature type="compositionally biased region" description="Low complexity" evidence="2">
    <location>
        <begin position="703"/>
        <end position="717"/>
    </location>
</feature>
<gene>
    <name type="ORF">ORF1</name>
</gene>
<reference key="1">
    <citation type="journal article" date="1998" name="Hepatol. Res.">
        <title>Molecular cloning and characterization of a novel DNA virus(TTV) associated with posttransfusion hepatitis of unknown etiology.</title>
        <authorList>
            <person name="Okamoto H."/>
            <person name="Nishizawa T."/>
            <person name="Kato N."/>
            <person name="Ukita M."/>
            <person name="Ikeda H."/>
            <person name="Iizuka H."/>
            <person name="Miyakawa Y."/>
            <person name="Mayumi M."/>
        </authorList>
    </citation>
    <scope>NUCLEOTIDE SEQUENCE [GENOMIC DNA]</scope>
</reference>
<sequence length="770" mass="90214">MAYGWWRRRRRRWRRWRRRPWRRRWRTRRRRPARRRGRRRNVRRRRRGGRWRRRYRRWKRKGRRRKKAKIIIRQWQPNYRRRCNIVGYIPVLICGENTVSRNYATHSDDTNYPGPFGGGMTTDKFTLRILYDEYKRFMNYWTASNEDLDLCRYLGVNLYFFRHPDVDFIIKINTMPPFLDTELTAPSIHPGMLALDKRARWIPSLKSRPGKKHYIKIRVGAPRMFTDKWYPQTDLCDMVLLTVYATAADMQYPFGSPLTDSVVVNFQVLQSMYDKTISILPDEKSQREILLNKIASYIPFYNTTQTIAQLKPFIDAGNVTSGATATTWASYINTTKFTTATTTTYAYPGTNRPPVTMLTCNDSWYRGTVYNTQIQQLPIKAAKLYLEATKTLLGNTFTNEDYTLEYHGGLYSSIWLSPGRSYFETTGAYTDIKYNPFTDRGEGNMLWIDWLSKKNMNYDKVQSKCLISDLPLWAAAYGYVEFCAKSTGDQNIHMNARLLIRSPFTDPQLLVHTDPTKGFVPYSLNFGNGKMPGGSSNVPIRMRAKWYPTLFHQQEVLEALAQSGPFAYHSDIKKVSLGMKYRFKWIWGGNPVRQQVVRNPCKETHSSGNRVPRSLQIVDPKYNSPELTFHTWDFRRGLFGPKAIQRMQQQPTTTDIFSAGRKRPRRDTEVYHSSQEGEQKESLLFPPVKLLRRVPPWEDSQQEESGSQSSEEETQTVSQQLKQQLQQQRILGVKLRLLFNQVQKIQQNQDINPTLLPRGGDLASLFQIAP</sequence>
<accession>O70739</accession>
<dbReference type="EMBL" id="AB008394">
    <property type="protein sequence ID" value="BAA25131.1"/>
    <property type="molecule type" value="Genomic_DNA"/>
</dbReference>
<dbReference type="SMR" id="O70739"/>
<dbReference type="Proteomes" id="UP000008778">
    <property type="component" value="Genome"/>
</dbReference>
<dbReference type="GO" id="GO:0039615">
    <property type="term" value="C:T=1 icosahedral viral capsid"/>
    <property type="evidence" value="ECO:0007669"/>
    <property type="project" value="UniProtKB-KW"/>
</dbReference>
<dbReference type="InterPro" id="IPR004219">
    <property type="entry name" value="TTvirus_Unk"/>
</dbReference>
<dbReference type="Pfam" id="PF02956">
    <property type="entry name" value="TT_ORF1"/>
    <property type="match status" value="1"/>
</dbReference>
<comment type="function">
    <text evidence="1">Self-assembles to form an icosahedral capsid with a T=1 symmetry, about 30 nm in diameter, and consisting of 60 capsid proteins. The capsid encapsulates the genomic DNA. Capsid protein is involved in attachment and entry into the host cell (By similarity).</text>
</comment>
<comment type="subcellular location">
    <subcellularLocation>
        <location evidence="3">Virion</location>
    </subcellularLocation>
</comment>
<comment type="similarity">
    <text evidence="3">Belongs to the anelloviridae capsid protein family.</text>
</comment>
<keyword id="KW-0167">Capsid protein</keyword>
<keyword id="KW-1185">Reference proteome</keyword>
<keyword id="KW-1140">T=1 icosahedral capsid protein</keyword>
<keyword id="KW-0946">Virion</keyword>
<organismHost>
    <name type="scientific">Homo sapiens</name>
    <name type="common">Human</name>
    <dbReference type="NCBI Taxonomy" id="9606"/>
</organismHost>
<protein>
    <recommendedName>
        <fullName>Capsid protein</fullName>
    </recommendedName>
</protein>
<evidence type="ECO:0000250" key="1"/>
<evidence type="ECO:0000256" key="2">
    <source>
        <dbReference type="SAM" id="MobiDB-lite"/>
    </source>
</evidence>
<evidence type="ECO:0000305" key="3"/>
<organism>
    <name type="scientific">Torque teno virus 1 (isolate TA278)</name>
    <dbReference type="NCBI Taxonomy" id="766182"/>
    <lineage>
        <taxon>Viruses</taxon>
        <taxon>Viruses incertae sedis</taxon>
        <taxon>Anelloviridae</taxon>
        <taxon>Alphatorquevirus</taxon>
        <taxon>Alphatorquevirus homin1</taxon>
    </lineage>
</organism>
<proteinExistence type="inferred from homology"/>
<name>CAPSD_TTVA1</name>